<organism>
    <name type="scientific">Homo sapiens</name>
    <name type="common">Human</name>
    <dbReference type="NCBI Taxonomy" id="9606"/>
    <lineage>
        <taxon>Eukaryota</taxon>
        <taxon>Metazoa</taxon>
        <taxon>Chordata</taxon>
        <taxon>Craniata</taxon>
        <taxon>Vertebrata</taxon>
        <taxon>Euteleostomi</taxon>
        <taxon>Mammalia</taxon>
        <taxon>Eutheria</taxon>
        <taxon>Euarchontoglires</taxon>
        <taxon>Primates</taxon>
        <taxon>Haplorrhini</taxon>
        <taxon>Catarrhini</taxon>
        <taxon>Hominidae</taxon>
        <taxon>Homo</taxon>
    </lineage>
</organism>
<gene>
    <name type="primary">PTGDR2</name>
    <name type="synonym">CRTH2</name>
    <name type="synonym">DL1R</name>
    <name type="synonym">GPR44</name>
</gene>
<reference key="1">
    <citation type="journal article" date="1999" name="Genomics">
        <title>Discovery of three novel orphan G-protein-coupled receptors.</title>
        <authorList>
            <person name="Marchese A."/>
            <person name="Sawzdargo M."/>
            <person name="Nguyen T."/>
            <person name="Cheng R."/>
            <person name="Heng H.H.Q."/>
            <person name="Nowak T."/>
            <person name="Im D.-S."/>
            <person name="Lynch K.R."/>
            <person name="George S.R."/>
            <person name="O'Dowd B.F."/>
        </authorList>
    </citation>
    <scope>NUCLEOTIDE SEQUENCE [GENOMIC DNA]</scope>
    <scope>VARIANT ALA-204</scope>
</reference>
<reference key="2">
    <citation type="journal article" date="1999" name="J. Immunol.">
        <title>Selective expression of a novel surface molecule by human Th2 cells in vivo.</title>
        <authorList>
            <person name="Nagata K."/>
            <person name="Tanaka K."/>
            <person name="Ogawa K."/>
            <person name="Kemmotsu K."/>
            <person name="Imai T."/>
            <person name="Yoshie O."/>
            <person name="Abe H."/>
            <person name="Tada K."/>
            <person name="Nakamura M."/>
            <person name="Sugamura K."/>
            <person name="Takano S."/>
        </authorList>
    </citation>
    <scope>NUCLEOTIDE SEQUENCE [MRNA]</scope>
    <scope>TISSUE SPECIFICITY</scope>
    <scope>VARIANT ALA-204</scope>
    <source>
        <tissue>Blood</tissue>
    </source>
</reference>
<reference key="3">
    <citation type="submission" date="1999-03" db="EMBL/GenBank/DDBJ databases">
        <title>Tissue expression and chromosomal organization of a novel G protein-coupled receptor.</title>
        <authorList>
            <person name="Methner A."/>
            <person name="Schroeder S."/>
        </authorList>
    </citation>
    <scope>NUCLEOTIDE SEQUENCE [MRNA]</scope>
    <scope>VARIANT ALA-204</scope>
    <source>
        <tissue>Placenta</tissue>
    </source>
</reference>
<reference key="4">
    <citation type="submission" date="2003-12" db="EMBL/GenBank/DDBJ databases">
        <title>cDNA clones of human proteins involved in signal transduction sequenced by the Guthrie cDNA resource center (www.cdna.org).</title>
        <authorList>
            <person name="King M.M."/>
            <person name="Aronstam R.S."/>
            <person name="Sharma S.V."/>
        </authorList>
    </citation>
    <scope>NUCLEOTIDE SEQUENCE [LARGE SCALE MRNA]</scope>
    <scope>VARIANT ALA-204</scope>
    <source>
        <tissue>Placenta</tissue>
    </source>
</reference>
<reference key="5">
    <citation type="journal article" date="2006" name="Nature">
        <title>Human chromosome 11 DNA sequence and analysis including novel gene identification.</title>
        <authorList>
            <person name="Taylor T.D."/>
            <person name="Noguchi H."/>
            <person name="Totoki Y."/>
            <person name="Toyoda A."/>
            <person name="Kuroki Y."/>
            <person name="Dewar K."/>
            <person name="Lloyd C."/>
            <person name="Itoh T."/>
            <person name="Takeda T."/>
            <person name="Kim D.-W."/>
            <person name="She X."/>
            <person name="Barlow K.F."/>
            <person name="Bloom T."/>
            <person name="Bruford E."/>
            <person name="Chang J.L."/>
            <person name="Cuomo C.A."/>
            <person name="Eichler E."/>
            <person name="FitzGerald M.G."/>
            <person name="Jaffe D.B."/>
            <person name="LaButti K."/>
            <person name="Nicol R."/>
            <person name="Park H.-S."/>
            <person name="Seaman C."/>
            <person name="Sougnez C."/>
            <person name="Yang X."/>
            <person name="Zimmer A.R."/>
            <person name="Zody M.C."/>
            <person name="Birren B.W."/>
            <person name="Nusbaum C."/>
            <person name="Fujiyama A."/>
            <person name="Hattori M."/>
            <person name="Rogers J."/>
            <person name="Lander E.S."/>
            <person name="Sakaki Y."/>
        </authorList>
    </citation>
    <scope>NUCLEOTIDE SEQUENCE [LARGE SCALE GENOMIC DNA]</scope>
</reference>
<reference key="6">
    <citation type="journal article" date="2004" name="Genome Res.">
        <title>The status, quality, and expansion of the NIH full-length cDNA project: the Mammalian Gene Collection (MGC).</title>
        <authorList>
            <consortium name="The MGC Project Team"/>
        </authorList>
    </citation>
    <scope>NUCLEOTIDE SEQUENCE [LARGE SCALE MRNA]</scope>
    <scope>VARIANT ALA-204</scope>
</reference>
<reference key="7">
    <citation type="journal article" date="2001" name="Blood">
        <title>Prostaglandin D2 is a potent chemoattractant for human eosinophils that acts via a novel DP receptor.</title>
        <authorList>
            <person name="Monneret G."/>
            <person name="Gravel S."/>
            <person name="Diamond M."/>
            <person name="Rokach J."/>
            <person name="Powell W.S."/>
        </authorList>
    </citation>
    <scope>FUNCTION AS RECEPTOR FOR PGD2</scope>
</reference>
<reference key="8">
    <citation type="journal article" date="2001" name="Clin. Exp. Immunol.">
        <title>A novel surface molecule of Th2- and Tc2-type cells, CRTH2 expression on human peripheral and decidual CD4+ and CD8+ T cells during the early stage of pregnancy.</title>
        <authorList>
            <person name="Tsuda H."/>
            <person name="Michimata T."/>
            <person name="Sakai M."/>
            <person name="Nagata K."/>
            <person name="Nakamura M."/>
            <person name="Saito S."/>
        </authorList>
    </citation>
    <scope>TISSUE SPECIFICITY</scope>
</reference>
<reference key="9">
    <citation type="journal article" date="2001" name="J. Exp. Med.">
        <title>Prostaglandin D2 selectively induces chemotaxis in T helper type 2 cells, eosinophils, and basophils via seven-transmembrane receptor CRTH2.</title>
        <authorList>
            <person name="Hirai H."/>
            <person name="Tanaka K."/>
            <person name="Yoshie O."/>
            <person name="Ogawa K."/>
            <person name="Kenmotsu K."/>
            <person name="Takamori Y."/>
            <person name="Ichimasa M."/>
            <person name="Sugamura K."/>
            <person name="Nakamura M."/>
            <person name="Takano S."/>
            <person name="Nagata K."/>
        </authorList>
    </citation>
    <scope>FUNCTION AS RECEPTOR FOR PGD2</scope>
    <scope>TISSUE SPECIFICITY</scope>
</reference>
<reference key="10">
    <citation type="journal article" date="2002" name="Br. J. Pharmacol.">
        <title>Molecular pharmacology of the human prostaglandin D2 receptor, CRTH2.</title>
        <authorList>
            <person name="Sawyer N."/>
            <person name="Cauchon E."/>
            <person name="Chateauneuf A."/>
            <person name="Cruz R.P."/>
            <person name="Nicholson D.W."/>
            <person name="Metters K.M."/>
            <person name="O'Neill G.P."/>
            <person name="Gervais F.G."/>
        </authorList>
    </citation>
    <scope>TISSUE SPECIFICITY</scope>
    <scope>CHARACTERIZATION</scope>
</reference>
<reference key="11">
    <citation type="journal article" date="2007" name="Biochem. Pharmacol.">
        <title>Inhibition of PI3K and calcineurin suppresses chemoattractant receptor-homologous molecule expressed on Th2 cells (CRTH2)-dependent responses of Th2 lymphocytes to prostaglandin D(2).</title>
        <authorList>
            <person name="Xue L."/>
            <person name="Gyles S.L."/>
            <person name="Barrow A."/>
            <person name="Pettipher R."/>
        </authorList>
    </citation>
    <scope>FUNCTION AS PGD2 RECEPTOR</scope>
    <scope>FUNCTION IN PI3K SIGNALING</scope>
</reference>
<reference key="12">
    <citation type="journal article" date="2007" name="Eur. J. Pharmacol.">
        <title>Differential regulation of the signaling and trafficking of the two prostaglandin D2 receptors, prostanoid DP receptor and CRTH2.</title>
        <authorList>
            <person name="Gallant M.A."/>
            <person name="Slipetz D."/>
            <person name="Hamelin E."/>
            <person name="Rochdi M.D."/>
            <person name="Talbot S."/>
            <person name="de Brum-Fernandes A.J."/>
            <person name="Parent J.L."/>
        </authorList>
    </citation>
    <scope>SUBCELLULAR LOCATION</scope>
    <scope>PHOSPHORYLATION</scope>
</reference>
<reference key="13">
    <citation type="journal article" date="2010" name="Eur. J. Pharmacol.">
        <title>Characterization of C-terminal tail determinants involved in CRTH2 receptor trafficking: identification of a recycling motif.</title>
        <authorList>
            <person name="Roy S.J."/>
            <person name="Parent A."/>
            <person name="Gallant M.A."/>
            <person name="de Brum-Fernandes A.J."/>
            <person name="Stankova J."/>
            <person name="Parent J.L."/>
        </authorList>
    </citation>
    <scope>MUTAGENESIS OF ASP-330; SER-331; GLU-332; LEU-333 AND THR-347</scope>
    <scope>IDENTIFICATION OF A RECYCLING MOTIF</scope>
</reference>
<comment type="function">
    <text evidence="8 9 12">Receptor for prostaglandin D2 (PGD2). Coupled to the G(i)-protein. Receptor activation may result in pertussis toxin-sensitive decreases in cAMP levels and Ca(2+) mobilization. PI3K signaling is also implicated in mediating PTGDR2 effects. PGD2 induced receptor internalization. CRTH2 internalization can be regulated by diverse kinases such as, PKC, PKA, GRK2, GPRK5/GRK5 and GRK6. Receptor activation is responsible, at least in part, in immune regulation and allergic/inflammation responses.</text>
</comment>
<comment type="subcellular location">
    <subcellularLocation>
        <location evidence="18">Cell membrane</location>
        <topology evidence="18">Multi-pass membrane protein</topology>
    </subcellularLocation>
    <text evidence="13">Internalized receptors colocalized with RAB11A.</text>
</comment>
<comment type="tissue specificity">
    <text evidence="7 8 10 15">Widespread expression. High expression in stomach, small intestine, heart and thymus. Intermediate expression in colon, spinal cord and peripheral blood and low expression in brain, skeletal muscle and spleen. Expressed also on Th2- and Tc2- type cells, eosinophils and basophils.</text>
</comment>
<comment type="domain">
    <text>The 330-DSEL-333 motif is involved in the recycling of PTGDR2 to the cell surface after agonist-induced internalization. This motif seems to be required for GRK2 and GPRK5/GRK5 to promote agonist-induced internalization. Thr-347 is a major site for PKC-induced internalization of the receptor.</text>
</comment>
<comment type="PTM">
    <text evidence="13">Phosphorylated.</text>
</comment>
<comment type="similarity">
    <text evidence="4">Belongs to the G-protein coupled receptor 1 family.</text>
</comment>
<comment type="sequence caution" evidence="18">
    <conflict type="erroneous initiation">
        <sequence resource="EMBL-CDS" id="AAD21055"/>
    </conflict>
    <text>Extended N-terminus.</text>
</comment>
<comment type="sequence caution" evidence="18">
    <conflict type="frameshift">
        <sequence resource="EMBL-CDS" id="AAD21055"/>
    </conflict>
</comment>
<proteinExistence type="evidence at protein level"/>
<dbReference type="EMBL" id="AF118265">
    <property type="protein sequence ID" value="AAD21055.1"/>
    <property type="status" value="ALT_SEQ"/>
    <property type="molecule type" value="Genomic_DNA"/>
</dbReference>
<dbReference type="EMBL" id="AB008535">
    <property type="protein sequence ID" value="BAA74518.1"/>
    <property type="molecule type" value="mRNA"/>
</dbReference>
<dbReference type="EMBL" id="AF144308">
    <property type="protein sequence ID" value="AAD34539.1"/>
    <property type="molecule type" value="mRNA"/>
</dbReference>
<dbReference type="EMBL" id="AY507142">
    <property type="protein sequence ID" value="AAR92484.1"/>
    <property type="molecule type" value="mRNA"/>
</dbReference>
<dbReference type="EMBL" id="AP000777">
    <property type="status" value="NOT_ANNOTATED_CDS"/>
    <property type="molecule type" value="Genomic_DNA"/>
</dbReference>
<dbReference type="EMBL" id="BC096841">
    <property type="protein sequence ID" value="AAH96841.1"/>
    <property type="molecule type" value="mRNA"/>
</dbReference>
<dbReference type="CCDS" id="CCDS7994.1"/>
<dbReference type="RefSeq" id="NP_004769.2">
    <property type="nucleotide sequence ID" value="NM_004778.3"/>
</dbReference>
<dbReference type="PDB" id="6D26">
    <property type="method" value="X-ray"/>
    <property type="resolution" value="2.80 A"/>
    <property type="chains" value="A=1-339"/>
</dbReference>
<dbReference type="PDB" id="6D27">
    <property type="method" value="X-ray"/>
    <property type="resolution" value="2.74 A"/>
    <property type="chains" value="A=1-339"/>
</dbReference>
<dbReference type="PDB" id="7M8W">
    <property type="method" value="X-ray"/>
    <property type="resolution" value="2.61 A"/>
    <property type="chains" value="A=1-339"/>
</dbReference>
<dbReference type="PDB" id="8XXU">
    <property type="method" value="EM"/>
    <property type="resolution" value="2.54 A"/>
    <property type="chains" value="A=1-346"/>
</dbReference>
<dbReference type="PDB" id="8XXV">
    <property type="method" value="EM"/>
    <property type="resolution" value="2.33 A"/>
    <property type="chains" value="A=1-348"/>
</dbReference>
<dbReference type="PDB" id="9IYB">
    <property type="method" value="EM"/>
    <property type="resolution" value="2.82 A"/>
    <property type="chains" value="A=1-395"/>
</dbReference>
<dbReference type="PDBsum" id="6D26"/>
<dbReference type="PDBsum" id="6D27"/>
<dbReference type="PDBsum" id="7M8W"/>
<dbReference type="PDBsum" id="8XXU"/>
<dbReference type="PDBsum" id="8XXV"/>
<dbReference type="PDBsum" id="9IYB"/>
<dbReference type="EMDB" id="EMD-38761"/>
<dbReference type="EMDB" id="EMD-38762"/>
<dbReference type="EMDB" id="EMD-60994"/>
<dbReference type="SMR" id="Q9Y5Y4"/>
<dbReference type="BioGRID" id="116412">
    <property type="interactions" value="5"/>
</dbReference>
<dbReference type="CORUM" id="Q9Y5Y4"/>
<dbReference type="FunCoup" id="Q9Y5Y4">
    <property type="interactions" value="618"/>
</dbReference>
<dbReference type="STRING" id="9606.ENSP00000332812"/>
<dbReference type="BindingDB" id="Q9Y5Y4"/>
<dbReference type="ChEMBL" id="CHEMBL5071"/>
<dbReference type="DrugBank" id="DB00770">
    <property type="generic name" value="Alprostadil"/>
</dbReference>
<dbReference type="DrugBank" id="DB16053">
    <property type="generic name" value="ARRY-502"/>
</dbReference>
<dbReference type="DrugBank" id="DB11946">
    <property type="generic name" value="AZD-1981"/>
</dbReference>
<dbReference type="DrugBank" id="DB12524">
    <property type="generic name" value="BI-671800"/>
</dbReference>
<dbReference type="DrugBank" id="DB12789">
    <property type="generic name" value="Dinoprost"/>
</dbReference>
<dbReference type="DrugBank" id="DB00917">
    <property type="generic name" value="Dinoprostone"/>
</dbReference>
<dbReference type="DrugBank" id="DB12011">
    <property type="generic name" value="Fevipiprant"/>
</dbReference>
<dbReference type="DrugBank" id="DB01088">
    <property type="generic name" value="Iloprost"/>
</dbReference>
<dbReference type="DrugBank" id="DB00328">
    <property type="generic name" value="Indomethacin"/>
</dbReference>
<dbReference type="DrugBank" id="DB11629">
    <property type="generic name" value="Laropiprant"/>
</dbReference>
<dbReference type="DrugBank" id="DB11900">
    <property type="generic name" value="OC-459"/>
</dbReference>
<dbReference type="DrugBank" id="DB02056">
    <property type="generic name" value="Prostaglandin D2"/>
</dbReference>
<dbReference type="DrugBank" id="DB11658">
    <property type="generic name" value="QAV-680"/>
</dbReference>
<dbReference type="DrugBank" id="DB13036">
    <property type="generic name" value="Ramatroban"/>
</dbReference>
<dbReference type="DrugBank" id="DB12562">
    <property type="generic name" value="Setipiprant"/>
</dbReference>
<dbReference type="DrugBank" id="DB00605">
    <property type="generic name" value="Sulindac"/>
</dbReference>
<dbReference type="DrugBank" id="DB12272">
    <property type="generic name" value="Vidupiprant"/>
</dbReference>
<dbReference type="DrugBank" id="DB04828">
    <property type="generic name" value="Zomepirac"/>
</dbReference>
<dbReference type="DrugCentral" id="Q9Y5Y4"/>
<dbReference type="GuidetoPHARMACOLOGY" id="339"/>
<dbReference type="SwissLipids" id="SLP:000001575"/>
<dbReference type="GlyCosmos" id="Q9Y5Y4">
    <property type="glycosylation" value="2 sites, No reported glycans"/>
</dbReference>
<dbReference type="GlyGen" id="Q9Y5Y4">
    <property type="glycosylation" value="2 sites"/>
</dbReference>
<dbReference type="iPTMnet" id="Q9Y5Y4"/>
<dbReference type="PhosphoSitePlus" id="Q9Y5Y4"/>
<dbReference type="BioMuta" id="PTGDR2"/>
<dbReference type="DMDM" id="296439334"/>
<dbReference type="MassIVE" id="Q9Y5Y4"/>
<dbReference type="PaxDb" id="9606-ENSP00000332812"/>
<dbReference type="PeptideAtlas" id="Q9Y5Y4"/>
<dbReference type="ProteomicsDB" id="86540"/>
<dbReference type="Antibodypedia" id="2960">
    <property type="antibodies" value="656 antibodies from 40 providers"/>
</dbReference>
<dbReference type="DNASU" id="11251"/>
<dbReference type="Ensembl" id="ENST00000332539.5">
    <property type="protein sequence ID" value="ENSP00000332812.4"/>
    <property type="gene ID" value="ENSG00000183134.5"/>
</dbReference>
<dbReference type="GeneID" id="11251"/>
<dbReference type="KEGG" id="hsa:11251"/>
<dbReference type="MANE-Select" id="ENST00000332539.5">
    <property type="protein sequence ID" value="ENSP00000332812.4"/>
    <property type="RefSeq nucleotide sequence ID" value="NM_004778.3"/>
    <property type="RefSeq protein sequence ID" value="NP_004769.2"/>
</dbReference>
<dbReference type="UCSC" id="uc001nqc.3">
    <property type="organism name" value="human"/>
</dbReference>
<dbReference type="AGR" id="HGNC:4502"/>
<dbReference type="CTD" id="11251"/>
<dbReference type="DisGeNET" id="11251"/>
<dbReference type="GeneCards" id="PTGDR2"/>
<dbReference type="HGNC" id="HGNC:4502">
    <property type="gene designation" value="PTGDR2"/>
</dbReference>
<dbReference type="HPA" id="ENSG00000183134">
    <property type="expression patterns" value="Tissue enhanced (intestine, skeletal muscle, stomach)"/>
</dbReference>
<dbReference type="MIM" id="604837">
    <property type="type" value="gene"/>
</dbReference>
<dbReference type="neXtProt" id="NX_Q9Y5Y4"/>
<dbReference type="OpenTargets" id="ENSG00000183134"/>
<dbReference type="PharmGKB" id="PA28891"/>
<dbReference type="VEuPathDB" id="HostDB:ENSG00000183134"/>
<dbReference type="eggNOG" id="ENOG502QTYS">
    <property type="taxonomic scope" value="Eukaryota"/>
</dbReference>
<dbReference type="GeneTree" id="ENSGT00940000162009"/>
<dbReference type="HOGENOM" id="CLU_009579_8_0_1"/>
<dbReference type="InParanoid" id="Q9Y5Y4"/>
<dbReference type="OMA" id="CPDLCRK"/>
<dbReference type="OrthoDB" id="10008828at2759"/>
<dbReference type="PAN-GO" id="Q9Y5Y4">
    <property type="GO annotations" value="5 GO annotations based on evolutionary models"/>
</dbReference>
<dbReference type="PhylomeDB" id="Q9Y5Y4"/>
<dbReference type="TreeFam" id="TF330976"/>
<dbReference type="PathwayCommons" id="Q9Y5Y4"/>
<dbReference type="Reactome" id="R-HSA-391908">
    <property type="pathway name" value="Prostanoid ligand receptors"/>
</dbReference>
<dbReference type="Reactome" id="R-HSA-418594">
    <property type="pathway name" value="G alpha (i) signalling events"/>
</dbReference>
<dbReference type="SignaLink" id="Q9Y5Y4"/>
<dbReference type="BioGRID-ORCS" id="11251">
    <property type="hits" value="11 hits in 1154 CRISPR screens"/>
</dbReference>
<dbReference type="GeneWiki" id="GPR44"/>
<dbReference type="GenomeRNAi" id="11251"/>
<dbReference type="Pharos" id="Q9Y5Y4">
    <property type="development level" value="Tchem"/>
</dbReference>
<dbReference type="PRO" id="PR:Q9Y5Y4"/>
<dbReference type="Proteomes" id="UP000005640">
    <property type="component" value="Chromosome 11"/>
</dbReference>
<dbReference type="RNAct" id="Q9Y5Y4">
    <property type="molecule type" value="protein"/>
</dbReference>
<dbReference type="Bgee" id="ENSG00000183134">
    <property type="expression patterns" value="Expressed in mucosa of transverse colon and 82 other cell types or tissues"/>
</dbReference>
<dbReference type="GO" id="GO:0043005">
    <property type="term" value="C:neuron projection"/>
    <property type="evidence" value="ECO:0000318"/>
    <property type="project" value="GO_Central"/>
</dbReference>
<dbReference type="GO" id="GO:0005886">
    <property type="term" value="C:plasma membrane"/>
    <property type="evidence" value="ECO:0000318"/>
    <property type="project" value="GO_Central"/>
</dbReference>
<dbReference type="GO" id="GO:0004930">
    <property type="term" value="F:G protein-coupled receptor activity"/>
    <property type="evidence" value="ECO:0000314"/>
    <property type="project" value="UniProtKB"/>
</dbReference>
<dbReference type="GO" id="GO:0042923">
    <property type="term" value="F:neuropeptide binding"/>
    <property type="evidence" value="ECO:0000318"/>
    <property type="project" value="GO_Central"/>
</dbReference>
<dbReference type="GO" id="GO:0004956">
    <property type="term" value="F:prostaglandin D receptor activity"/>
    <property type="evidence" value="ECO:0000314"/>
    <property type="project" value="UniProtKB"/>
</dbReference>
<dbReference type="GO" id="GO:0004958">
    <property type="term" value="F:prostaglandin F receptor activity"/>
    <property type="evidence" value="ECO:0007669"/>
    <property type="project" value="Ensembl"/>
</dbReference>
<dbReference type="GO" id="GO:0001785">
    <property type="term" value="F:prostaglandin J receptor activity"/>
    <property type="evidence" value="ECO:0007669"/>
    <property type="project" value="Ensembl"/>
</dbReference>
<dbReference type="GO" id="GO:0007193">
    <property type="term" value="P:adenylate cyclase-inhibiting G protein-coupled receptor signaling pathway"/>
    <property type="evidence" value="ECO:0007669"/>
    <property type="project" value="Ensembl"/>
</dbReference>
<dbReference type="GO" id="GO:0019722">
    <property type="term" value="P:calcium-mediated signaling"/>
    <property type="evidence" value="ECO:0000314"/>
    <property type="project" value="UniProtKB"/>
</dbReference>
<dbReference type="GO" id="GO:0071799">
    <property type="term" value="P:cellular response to prostaglandin D stimulus"/>
    <property type="evidence" value="ECO:0000304"/>
    <property type="project" value="BHF-UCL"/>
</dbReference>
<dbReference type="GO" id="GO:0006935">
    <property type="term" value="P:chemotaxis"/>
    <property type="evidence" value="ECO:0000314"/>
    <property type="project" value="UniProtKB"/>
</dbReference>
<dbReference type="GO" id="GO:0007186">
    <property type="term" value="P:G protein-coupled receptor signaling pathway"/>
    <property type="evidence" value="ECO:0000314"/>
    <property type="project" value="UniProtKB"/>
</dbReference>
<dbReference type="GO" id="GO:0006955">
    <property type="term" value="P:immune response"/>
    <property type="evidence" value="ECO:0000304"/>
    <property type="project" value="ProtInc"/>
</dbReference>
<dbReference type="GO" id="GO:2000255">
    <property type="term" value="P:negative regulation of male germ cell proliferation"/>
    <property type="evidence" value="ECO:0007669"/>
    <property type="project" value="Ensembl"/>
</dbReference>
<dbReference type="GO" id="GO:0007218">
    <property type="term" value="P:neuropeptide signaling pathway"/>
    <property type="evidence" value="ECO:0000318"/>
    <property type="project" value="GO_Central"/>
</dbReference>
<dbReference type="GO" id="GO:0045745">
    <property type="term" value="P:positive regulation of G protein-coupled receptor signaling pathway"/>
    <property type="evidence" value="ECO:0007669"/>
    <property type="project" value="Ensembl"/>
</dbReference>
<dbReference type="CDD" id="cd15118">
    <property type="entry name" value="7tmA_PD2R2_CRTH2"/>
    <property type="match status" value="1"/>
</dbReference>
<dbReference type="FunFam" id="1.20.1070.10:FF:000034">
    <property type="entry name" value="G-protein coupled receptor 1"/>
    <property type="match status" value="1"/>
</dbReference>
<dbReference type="Gene3D" id="1.20.1070.10">
    <property type="entry name" value="Rhodopsin 7-helix transmembrane proteins"/>
    <property type="match status" value="1"/>
</dbReference>
<dbReference type="InterPro" id="IPR000826">
    <property type="entry name" value="Formyl_rcpt-rel"/>
</dbReference>
<dbReference type="InterPro" id="IPR000276">
    <property type="entry name" value="GPCR_Rhodpsn"/>
</dbReference>
<dbReference type="InterPro" id="IPR017452">
    <property type="entry name" value="GPCR_Rhodpsn_7TM"/>
</dbReference>
<dbReference type="PANTHER" id="PTHR24225">
    <property type="entry name" value="CHEMOTACTIC RECEPTOR"/>
    <property type="match status" value="1"/>
</dbReference>
<dbReference type="PANTHER" id="PTHR24225:SF72">
    <property type="entry name" value="G-PROTEIN COUPLED RECEPTORS FAMILY 1 PROFILE DOMAIN-CONTAINING PROTEIN-RELATED"/>
    <property type="match status" value="1"/>
</dbReference>
<dbReference type="Pfam" id="PF00001">
    <property type="entry name" value="7tm_1"/>
    <property type="match status" value="1"/>
</dbReference>
<dbReference type="PRINTS" id="PR00526">
    <property type="entry name" value="FMETLEUPHER"/>
</dbReference>
<dbReference type="PRINTS" id="PR00237">
    <property type="entry name" value="GPCRRHODOPSN"/>
</dbReference>
<dbReference type="SUPFAM" id="SSF81321">
    <property type="entry name" value="Family A G protein-coupled receptor-like"/>
    <property type="match status" value="1"/>
</dbReference>
<dbReference type="PROSITE" id="PS00237">
    <property type="entry name" value="G_PROTEIN_RECEP_F1_1"/>
    <property type="match status" value="1"/>
</dbReference>
<dbReference type="PROSITE" id="PS50262">
    <property type="entry name" value="G_PROTEIN_RECEP_F1_2"/>
    <property type="match status" value="1"/>
</dbReference>
<feature type="chain" id="PRO_0000069572" description="Prostaglandin D2 receptor 2">
    <location>
        <begin position="1"/>
        <end position="395"/>
    </location>
</feature>
<feature type="topological domain" description="Extracellular" evidence="3">
    <location>
        <begin position="1"/>
        <end position="33"/>
    </location>
</feature>
<feature type="transmembrane region" description="Helical; Name=1" evidence="3">
    <location>
        <begin position="34"/>
        <end position="56"/>
    </location>
</feature>
<feature type="topological domain" description="Cytoplasmic" evidence="3">
    <location>
        <begin position="57"/>
        <end position="67"/>
    </location>
</feature>
<feature type="transmembrane region" description="Helical; Name=2" evidence="3">
    <location>
        <begin position="68"/>
        <end position="89"/>
    </location>
</feature>
<feature type="topological domain" description="Extracellular" evidence="3">
    <location>
        <begin position="90"/>
        <end position="106"/>
    </location>
</feature>
<feature type="transmembrane region" description="Helical; Name=3" evidence="3">
    <location>
        <begin position="107"/>
        <end position="127"/>
    </location>
</feature>
<feature type="topological domain" description="Cytoplasmic" evidence="3">
    <location>
        <begin position="128"/>
        <end position="146"/>
    </location>
</feature>
<feature type="transmembrane region" description="Helical; Name=4" evidence="3">
    <location>
        <begin position="147"/>
        <end position="168"/>
    </location>
</feature>
<feature type="topological domain" description="Extracellular" evidence="3">
    <location>
        <begin position="169"/>
        <end position="210"/>
    </location>
</feature>
<feature type="transmembrane region" description="Helical; Name=5" evidence="3">
    <location>
        <begin position="211"/>
        <end position="231"/>
    </location>
</feature>
<feature type="topological domain" description="Cytoplasmic" evidence="3">
    <location>
        <begin position="232"/>
        <end position="247"/>
    </location>
</feature>
<feature type="transmembrane region" description="Helical; Name=6" evidence="3">
    <location>
        <begin position="248"/>
        <end position="269"/>
    </location>
</feature>
<feature type="topological domain" description="Extracellular" evidence="3">
    <location>
        <begin position="270"/>
        <end position="288"/>
    </location>
</feature>
<feature type="transmembrane region" description="Helical; Name=7" evidence="3">
    <location>
        <begin position="289"/>
        <end position="308"/>
    </location>
</feature>
<feature type="topological domain" description="Cytoplasmic" evidence="3">
    <location>
        <begin position="309"/>
        <end position="395"/>
    </location>
</feature>
<feature type="region of interest" description="Disordered" evidence="5">
    <location>
        <begin position="333"/>
        <end position="363"/>
    </location>
</feature>
<feature type="short sequence motif" description="Involved in the recycling of CRTH2">
    <location>
        <begin position="330"/>
        <end position="333"/>
    </location>
</feature>
<feature type="modified residue" description="Phosphoserine" evidence="1">
    <location>
        <position position="331"/>
    </location>
</feature>
<feature type="modified residue" description="Phosphoserine" evidence="2">
    <location>
        <position position="345"/>
    </location>
</feature>
<feature type="glycosylation site" description="N-linked (GlcNAc...) asparagine" evidence="3">
    <location>
        <position position="4"/>
    </location>
</feature>
<feature type="glycosylation site" description="N-linked (GlcNAc...) asparagine" evidence="3">
    <location>
        <position position="25"/>
    </location>
</feature>
<feature type="disulfide bond" evidence="4">
    <location>
        <begin position="104"/>
        <end position="182"/>
    </location>
</feature>
<feature type="sequence variant" id="VAR_063131" description="In dbSNP:rs2467642." evidence="6 11 15 16 17">
    <original>V</original>
    <variation>A</variation>
    <location>
        <position position="204"/>
    </location>
</feature>
<feature type="mutagenesis site" description="45% increases internalization of PTGDR2." evidence="14">
    <original>D</original>
    <variation>A</variation>
    <location>
        <position position="330"/>
    </location>
</feature>
<feature type="mutagenesis site" description="45% increases internalization of PTGDR2." evidence="14">
    <original>S</original>
    <variation>A</variation>
    <location>
        <position position="331"/>
    </location>
</feature>
<feature type="mutagenesis site" description="45% increases internalization of PTGDR2." evidence="14">
    <original>E</original>
    <variation>A</variation>
    <location>
        <position position="332"/>
    </location>
</feature>
<feature type="mutagenesis site" description="45% increase in internalization of PTGDR2." evidence="14">
    <original>L</original>
    <variation>A</variation>
    <location>
        <position position="333"/>
    </location>
</feature>
<feature type="mutagenesis site" description="Decreases in PKC-induced internalization of PTGDR2." evidence="14">
    <original>T</original>
    <variation>A</variation>
    <location>
        <position position="347"/>
    </location>
</feature>
<feature type="helix" evidence="20">
    <location>
        <begin position="12"/>
        <end position="19"/>
    </location>
</feature>
<feature type="strand" evidence="20">
    <location>
        <begin position="22"/>
        <end position="26"/>
    </location>
</feature>
<feature type="helix" evidence="20">
    <location>
        <begin position="33"/>
        <end position="59"/>
    </location>
</feature>
<feature type="helix" evidence="20">
    <location>
        <begin position="65"/>
        <end position="92"/>
    </location>
</feature>
<feature type="helix" evidence="20">
    <location>
        <begin position="102"/>
        <end position="134"/>
    </location>
</feature>
<feature type="helix" evidence="20">
    <location>
        <begin position="136"/>
        <end position="142"/>
    </location>
</feature>
<feature type="helix" evidence="20">
    <location>
        <begin position="145"/>
        <end position="162"/>
    </location>
</feature>
<feature type="helix" evidence="20">
    <location>
        <begin position="164"/>
        <end position="168"/>
    </location>
</feature>
<feature type="strand" evidence="20">
    <location>
        <begin position="169"/>
        <end position="174"/>
    </location>
</feature>
<feature type="strand" evidence="19">
    <location>
        <begin position="176"/>
        <end position="178"/>
    </location>
</feature>
<feature type="strand" evidence="20">
    <location>
        <begin position="180"/>
        <end position="184"/>
    </location>
</feature>
<feature type="helix" evidence="20">
    <location>
        <begin position="186"/>
        <end position="188"/>
    </location>
</feature>
<feature type="helix" evidence="20">
    <location>
        <begin position="195"/>
        <end position="213"/>
    </location>
</feature>
<feature type="helix" evidence="20">
    <location>
        <begin position="216"/>
        <end position="236"/>
    </location>
</feature>
<feature type="helix" evidence="20">
    <location>
        <begin position="245"/>
        <end position="272"/>
    </location>
</feature>
<feature type="helix" evidence="20">
    <location>
        <begin position="278"/>
        <end position="306"/>
    </location>
</feature>
<feature type="helix" evidence="20">
    <location>
        <begin position="309"/>
        <end position="324"/>
    </location>
</feature>
<feature type="turn" evidence="20">
    <location>
        <begin position="325"/>
        <end position="327"/>
    </location>
</feature>
<evidence type="ECO:0000250" key="1">
    <source>
        <dbReference type="UniProtKB" id="Q6XKD3"/>
    </source>
</evidence>
<evidence type="ECO:0000250" key="2">
    <source>
        <dbReference type="UniProtKB" id="Q9Z2J6"/>
    </source>
</evidence>
<evidence type="ECO:0000255" key="3"/>
<evidence type="ECO:0000255" key="4">
    <source>
        <dbReference type="PROSITE-ProRule" id="PRU00521"/>
    </source>
</evidence>
<evidence type="ECO:0000256" key="5">
    <source>
        <dbReference type="SAM" id="MobiDB-lite"/>
    </source>
</evidence>
<evidence type="ECO:0000269" key="6">
    <source>
    </source>
</evidence>
<evidence type="ECO:0000269" key="7">
    <source>
    </source>
</evidence>
<evidence type="ECO:0000269" key="8">
    <source>
    </source>
</evidence>
<evidence type="ECO:0000269" key="9">
    <source>
    </source>
</evidence>
<evidence type="ECO:0000269" key="10">
    <source>
    </source>
</evidence>
<evidence type="ECO:0000269" key="11">
    <source>
    </source>
</evidence>
<evidence type="ECO:0000269" key="12">
    <source>
    </source>
</evidence>
<evidence type="ECO:0000269" key="13">
    <source>
    </source>
</evidence>
<evidence type="ECO:0000269" key="14">
    <source>
    </source>
</evidence>
<evidence type="ECO:0000269" key="15">
    <source>
    </source>
</evidence>
<evidence type="ECO:0000269" key="16">
    <source ref="3"/>
</evidence>
<evidence type="ECO:0000269" key="17">
    <source ref="4"/>
</evidence>
<evidence type="ECO:0000305" key="18"/>
<evidence type="ECO:0007829" key="19">
    <source>
        <dbReference type="PDB" id="6D27"/>
    </source>
</evidence>
<evidence type="ECO:0007829" key="20">
    <source>
        <dbReference type="PDB" id="7M8W"/>
    </source>
</evidence>
<keyword id="KW-0002">3D-structure</keyword>
<keyword id="KW-1003">Cell membrane</keyword>
<keyword id="KW-1015">Disulfide bond</keyword>
<keyword id="KW-0297">G-protein coupled receptor</keyword>
<keyword id="KW-0325">Glycoprotein</keyword>
<keyword id="KW-0472">Membrane</keyword>
<keyword id="KW-0597">Phosphoprotein</keyword>
<keyword id="KW-1267">Proteomics identification</keyword>
<keyword id="KW-0675">Receptor</keyword>
<keyword id="KW-1185">Reference proteome</keyword>
<keyword id="KW-0807">Transducer</keyword>
<keyword id="KW-0812">Transmembrane</keyword>
<keyword id="KW-1133">Transmembrane helix</keyword>
<protein>
    <recommendedName>
        <fullName>Prostaglandin D2 receptor 2</fullName>
    </recommendedName>
    <alternativeName>
        <fullName>Chemoattractant receptor-homologous molecule expressed on Th2 cells</fullName>
    </alternativeName>
    <alternativeName>
        <fullName>G-protein coupled receptor 44</fullName>
    </alternativeName>
    <cdAntigenName>CD294</cdAntigenName>
</protein>
<name>PD2R2_HUMAN</name>
<accession>Q9Y5Y4</accession>
<accession>O94765</accession>
<accession>Q4QRI6</accession>
<sequence length="395" mass="43268">MSANATLKPLCPILEQMSRLQSHSNTSIRYIDHAAVLLHGLASLLGLVENGVILFVVGCRMRQTVVTTWVLHLALSDLLASASLPFFTYFLAVGHSWELGTTFCKLHSSIFFLNMFASGFLLSAISLDRCLQVVRPVWAQNHRTVAAAHKVCLVLWALAVLNTVPYFVFRDTISRLDGRIMCYYNVLLLNPGPDRDATCNSRQVALAVSKFLLAFLVPLAIIASSHAAVSLRLQHRGRRRPGRFVRLVAAVVAAFALCWGPYHVFSLLEARAHANPGLRPLVWRGLPFVTSLAFFNSVANPVLYVLTCPDMLRKLRRSLRTVLESVLVDDSELGGAGSSRRRRTSSTARSASPLALCSRPEEPRGPARLLGWLLGSCAASPQTGPLNRALSSTSS</sequence>